<accession>B7NHF5</accession>
<sequence>MATYLIGDVHGCYDELIALLHKVEFTPGKDTLWLTGDLVARGPGSLDVLRYVKSLGDSVRLVLGNHDLHLLAVFAGISRNKPKDRLTPLLEAPDADELLNWLRRQPLLQIDEEKKLVMAHAGITPQWDLQTAKECARDVEAVLSSDSYPFFLDAMYGDMPNNWSPELRGLGRLRFITNAFTRMRFCFPNGQLDMYSKESPEEAPAPLKPWFAIPGPVAEEYSIAFGHWASLEGKGTPEGIYALDTGCCWGGTLTCLRWEDKQYFVQPSNRHKDMGEGEAAAS</sequence>
<keyword id="KW-0378">Hydrolase</keyword>
<gene>
    <name evidence="1" type="primary">apaH</name>
    <name type="ordered locus">ECIAI39_0052</name>
</gene>
<comment type="function">
    <text evidence="1">Hydrolyzes diadenosine 5',5'''-P1,P4-tetraphosphate to yield ADP.</text>
</comment>
<comment type="catalytic activity">
    <reaction evidence="1">
        <text>P(1),P(4)-bis(5'-adenosyl) tetraphosphate + H2O = 2 ADP + 2 H(+)</text>
        <dbReference type="Rhea" id="RHEA:24252"/>
        <dbReference type="ChEBI" id="CHEBI:15377"/>
        <dbReference type="ChEBI" id="CHEBI:15378"/>
        <dbReference type="ChEBI" id="CHEBI:58141"/>
        <dbReference type="ChEBI" id="CHEBI:456216"/>
        <dbReference type="EC" id="3.6.1.41"/>
    </reaction>
</comment>
<comment type="similarity">
    <text evidence="1">Belongs to the Ap4A hydrolase family.</text>
</comment>
<reference key="1">
    <citation type="journal article" date="2009" name="PLoS Genet.">
        <title>Organised genome dynamics in the Escherichia coli species results in highly diverse adaptive paths.</title>
        <authorList>
            <person name="Touchon M."/>
            <person name="Hoede C."/>
            <person name="Tenaillon O."/>
            <person name="Barbe V."/>
            <person name="Baeriswyl S."/>
            <person name="Bidet P."/>
            <person name="Bingen E."/>
            <person name="Bonacorsi S."/>
            <person name="Bouchier C."/>
            <person name="Bouvet O."/>
            <person name="Calteau A."/>
            <person name="Chiapello H."/>
            <person name="Clermont O."/>
            <person name="Cruveiller S."/>
            <person name="Danchin A."/>
            <person name="Diard M."/>
            <person name="Dossat C."/>
            <person name="Karoui M.E."/>
            <person name="Frapy E."/>
            <person name="Garry L."/>
            <person name="Ghigo J.M."/>
            <person name="Gilles A.M."/>
            <person name="Johnson J."/>
            <person name="Le Bouguenec C."/>
            <person name="Lescat M."/>
            <person name="Mangenot S."/>
            <person name="Martinez-Jehanne V."/>
            <person name="Matic I."/>
            <person name="Nassif X."/>
            <person name="Oztas S."/>
            <person name="Petit M.A."/>
            <person name="Pichon C."/>
            <person name="Rouy Z."/>
            <person name="Ruf C.S."/>
            <person name="Schneider D."/>
            <person name="Tourret J."/>
            <person name="Vacherie B."/>
            <person name="Vallenet D."/>
            <person name="Medigue C."/>
            <person name="Rocha E.P.C."/>
            <person name="Denamur E."/>
        </authorList>
    </citation>
    <scope>NUCLEOTIDE SEQUENCE [LARGE SCALE GENOMIC DNA]</scope>
    <source>
        <strain>IAI39 / ExPEC</strain>
    </source>
</reference>
<name>APAH_ECO7I</name>
<protein>
    <recommendedName>
        <fullName evidence="1">Bis(5'-nucleosyl)-tetraphosphatase, symmetrical</fullName>
        <ecNumber evidence="1">3.6.1.41</ecNumber>
    </recommendedName>
    <alternativeName>
        <fullName evidence="1">Ap4A hydrolase</fullName>
    </alternativeName>
    <alternativeName>
        <fullName evidence="1">Diadenosine 5',5'''-P1,P4-tetraphosphate pyrophosphohydrolase</fullName>
    </alternativeName>
    <alternativeName>
        <fullName evidence="1">Diadenosine tetraphosphatase</fullName>
    </alternativeName>
</protein>
<dbReference type="EC" id="3.6.1.41" evidence="1"/>
<dbReference type="EMBL" id="CU928164">
    <property type="protein sequence ID" value="CAR16193.1"/>
    <property type="molecule type" value="Genomic_DNA"/>
</dbReference>
<dbReference type="RefSeq" id="WP_000257195.1">
    <property type="nucleotide sequence ID" value="NC_011750.1"/>
</dbReference>
<dbReference type="RefSeq" id="YP_002406100.1">
    <property type="nucleotide sequence ID" value="NC_011750.1"/>
</dbReference>
<dbReference type="SMR" id="B7NHF5"/>
<dbReference type="STRING" id="585057.ECIAI39_0052"/>
<dbReference type="KEGG" id="ect:ECIAI39_0052"/>
<dbReference type="PATRIC" id="fig|585057.6.peg.56"/>
<dbReference type="HOGENOM" id="CLU_056184_2_0_6"/>
<dbReference type="Proteomes" id="UP000000749">
    <property type="component" value="Chromosome"/>
</dbReference>
<dbReference type="GO" id="GO:0008803">
    <property type="term" value="F:bis(5'-nucleosyl)-tetraphosphatase (symmetrical) activity"/>
    <property type="evidence" value="ECO:0007669"/>
    <property type="project" value="UniProtKB-UniRule"/>
</dbReference>
<dbReference type="CDD" id="cd07422">
    <property type="entry name" value="MPP_ApaH"/>
    <property type="match status" value="1"/>
</dbReference>
<dbReference type="FunFam" id="3.60.21.10:FF:000013">
    <property type="entry name" value="Bis(5'-nucleosyl)-tetraphosphatase, symmetrical"/>
    <property type="match status" value="1"/>
</dbReference>
<dbReference type="Gene3D" id="3.60.21.10">
    <property type="match status" value="1"/>
</dbReference>
<dbReference type="HAMAP" id="MF_00199">
    <property type="entry name" value="ApaH"/>
    <property type="match status" value="1"/>
</dbReference>
<dbReference type="InterPro" id="IPR004617">
    <property type="entry name" value="ApaH"/>
</dbReference>
<dbReference type="InterPro" id="IPR004843">
    <property type="entry name" value="Calcineurin-like_PHP_ApaH"/>
</dbReference>
<dbReference type="InterPro" id="IPR029052">
    <property type="entry name" value="Metallo-depent_PP-like"/>
</dbReference>
<dbReference type="NCBIfam" id="TIGR00668">
    <property type="entry name" value="apaH"/>
    <property type="match status" value="1"/>
</dbReference>
<dbReference type="NCBIfam" id="NF001204">
    <property type="entry name" value="PRK00166.1"/>
    <property type="match status" value="1"/>
</dbReference>
<dbReference type="PANTHER" id="PTHR40942">
    <property type="match status" value="1"/>
</dbReference>
<dbReference type="PANTHER" id="PTHR40942:SF4">
    <property type="entry name" value="CYTOCHROME C5"/>
    <property type="match status" value="1"/>
</dbReference>
<dbReference type="Pfam" id="PF00149">
    <property type="entry name" value="Metallophos"/>
    <property type="match status" value="1"/>
</dbReference>
<dbReference type="PIRSF" id="PIRSF000903">
    <property type="entry name" value="B5n-ttraPtase_sm"/>
    <property type="match status" value="1"/>
</dbReference>
<dbReference type="SUPFAM" id="SSF56300">
    <property type="entry name" value="Metallo-dependent phosphatases"/>
    <property type="match status" value="1"/>
</dbReference>
<proteinExistence type="inferred from homology"/>
<organism>
    <name type="scientific">Escherichia coli O7:K1 (strain IAI39 / ExPEC)</name>
    <dbReference type="NCBI Taxonomy" id="585057"/>
    <lineage>
        <taxon>Bacteria</taxon>
        <taxon>Pseudomonadati</taxon>
        <taxon>Pseudomonadota</taxon>
        <taxon>Gammaproteobacteria</taxon>
        <taxon>Enterobacterales</taxon>
        <taxon>Enterobacteriaceae</taxon>
        <taxon>Escherichia</taxon>
    </lineage>
</organism>
<evidence type="ECO:0000255" key="1">
    <source>
        <dbReference type="HAMAP-Rule" id="MF_00199"/>
    </source>
</evidence>
<feature type="chain" id="PRO_1000118693" description="Bis(5'-nucleosyl)-tetraphosphatase, symmetrical">
    <location>
        <begin position="1"/>
        <end position="282"/>
    </location>
</feature>